<name>G6PI_NOSS1</name>
<proteinExistence type="inferred from homology"/>
<evidence type="ECO:0000255" key="1">
    <source>
        <dbReference type="HAMAP-Rule" id="MF_00473"/>
    </source>
</evidence>
<organism>
    <name type="scientific">Nostoc sp. (strain PCC 7120 / SAG 25.82 / UTEX 2576)</name>
    <dbReference type="NCBI Taxonomy" id="103690"/>
    <lineage>
        <taxon>Bacteria</taxon>
        <taxon>Bacillati</taxon>
        <taxon>Cyanobacteriota</taxon>
        <taxon>Cyanophyceae</taxon>
        <taxon>Nostocales</taxon>
        <taxon>Nostocaceae</taxon>
        <taxon>Nostoc</taxon>
    </lineage>
</organism>
<reference key="1">
    <citation type="journal article" date="2001" name="DNA Res.">
        <title>Complete genomic sequence of the filamentous nitrogen-fixing cyanobacterium Anabaena sp. strain PCC 7120.</title>
        <authorList>
            <person name="Kaneko T."/>
            <person name="Nakamura Y."/>
            <person name="Wolk C.P."/>
            <person name="Kuritz T."/>
            <person name="Sasamoto S."/>
            <person name="Watanabe A."/>
            <person name="Iriguchi M."/>
            <person name="Ishikawa A."/>
            <person name="Kawashima K."/>
            <person name="Kimura T."/>
            <person name="Kishida Y."/>
            <person name="Kohara M."/>
            <person name="Matsumoto M."/>
            <person name="Matsuno A."/>
            <person name="Muraki A."/>
            <person name="Nakazaki N."/>
            <person name="Shimpo S."/>
            <person name="Sugimoto M."/>
            <person name="Takazawa M."/>
            <person name="Yamada M."/>
            <person name="Yasuda M."/>
            <person name="Tabata S."/>
        </authorList>
    </citation>
    <scope>NUCLEOTIDE SEQUENCE [LARGE SCALE GENOMIC DNA]</scope>
    <source>
        <strain>PCC 7120 / SAG 25.82 / UTEX 2576</strain>
    </source>
</reference>
<feature type="chain" id="PRO_0000180582" description="Glucose-6-phosphate isomerase">
    <location>
        <begin position="1"/>
        <end position="528"/>
    </location>
</feature>
<feature type="active site" description="Proton donor" evidence="1">
    <location>
        <position position="322"/>
    </location>
</feature>
<feature type="active site" evidence="1">
    <location>
        <position position="351"/>
    </location>
</feature>
<feature type="active site" evidence="1">
    <location>
        <position position="455"/>
    </location>
</feature>
<accession>Q8YY05</accession>
<dbReference type="EC" id="5.3.1.9" evidence="1"/>
<dbReference type="EMBL" id="BA000019">
    <property type="protein sequence ID" value="BAB73007.1"/>
    <property type="molecule type" value="Genomic_DNA"/>
</dbReference>
<dbReference type="PIR" id="AG1937">
    <property type="entry name" value="AG1937"/>
</dbReference>
<dbReference type="RefSeq" id="WP_010995224.1">
    <property type="nucleotide sequence ID" value="NZ_RSCN01000008.1"/>
</dbReference>
<dbReference type="SMR" id="Q8YY05"/>
<dbReference type="STRING" id="103690.gene:10493064"/>
<dbReference type="KEGG" id="ana:alr1050"/>
<dbReference type="eggNOG" id="COG0166">
    <property type="taxonomic scope" value="Bacteria"/>
</dbReference>
<dbReference type="OrthoDB" id="140919at2"/>
<dbReference type="UniPathway" id="UPA00109">
    <property type="reaction ID" value="UER00181"/>
</dbReference>
<dbReference type="UniPathway" id="UPA00138"/>
<dbReference type="Proteomes" id="UP000002483">
    <property type="component" value="Chromosome"/>
</dbReference>
<dbReference type="GO" id="GO:0005829">
    <property type="term" value="C:cytosol"/>
    <property type="evidence" value="ECO:0007669"/>
    <property type="project" value="TreeGrafter"/>
</dbReference>
<dbReference type="GO" id="GO:0097367">
    <property type="term" value="F:carbohydrate derivative binding"/>
    <property type="evidence" value="ECO:0007669"/>
    <property type="project" value="InterPro"/>
</dbReference>
<dbReference type="GO" id="GO:0004347">
    <property type="term" value="F:glucose-6-phosphate isomerase activity"/>
    <property type="evidence" value="ECO:0007669"/>
    <property type="project" value="UniProtKB-UniRule"/>
</dbReference>
<dbReference type="GO" id="GO:0048029">
    <property type="term" value="F:monosaccharide binding"/>
    <property type="evidence" value="ECO:0007669"/>
    <property type="project" value="TreeGrafter"/>
</dbReference>
<dbReference type="GO" id="GO:0006094">
    <property type="term" value="P:gluconeogenesis"/>
    <property type="evidence" value="ECO:0007669"/>
    <property type="project" value="UniProtKB-UniRule"/>
</dbReference>
<dbReference type="GO" id="GO:0051156">
    <property type="term" value="P:glucose 6-phosphate metabolic process"/>
    <property type="evidence" value="ECO:0007669"/>
    <property type="project" value="TreeGrafter"/>
</dbReference>
<dbReference type="GO" id="GO:0006096">
    <property type="term" value="P:glycolytic process"/>
    <property type="evidence" value="ECO:0007669"/>
    <property type="project" value="UniProtKB-UniRule"/>
</dbReference>
<dbReference type="CDD" id="cd05015">
    <property type="entry name" value="SIS_PGI_1"/>
    <property type="match status" value="1"/>
</dbReference>
<dbReference type="CDD" id="cd05016">
    <property type="entry name" value="SIS_PGI_2"/>
    <property type="match status" value="1"/>
</dbReference>
<dbReference type="FunFam" id="3.40.50.10490:FF:000021">
    <property type="entry name" value="Glucose-6-phosphate isomerase"/>
    <property type="match status" value="1"/>
</dbReference>
<dbReference type="FunFam" id="3.40.50.10490:FF:000023">
    <property type="entry name" value="Glucose-6-phosphate isomerase"/>
    <property type="match status" value="1"/>
</dbReference>
<dbReference type="Gene3D" id="3.40.50.10490">
    <property type="entry name" value="Glucose-6-phosphate isomerase like protein, domain 1"/>
    <property type="match status" value="3"/>
</dbReference>
<dbReference type="HAMAP" id="MF_00473">
    <property type="entry name" value="G6P_isomerase"/>
    <property type="match status" value="1"/>
</dbReference>
<dbReference type="InterPro" id="IPR001672">
    <property type="entry name" value="G6P_Isomerase"/>
</dbReference>
<dbReference type="InterPro" id="IPR018189">
    <property type="entry name" value="Phosphoglucose_isomerase_CS"/>
</dbReference>
<dbReference type="InterPro" id="IPR046348">
    <property type="entry name" value="SIS_dom_sf"/>
</dbReference>
<dbReference type="InterPro" id="IPR035476">
    <property type="entry name" value="SIS_PGI_1"/>
</dbReference>
<dbReference type="InterPro" id="IPR035482">
    <property type="entry name" value="SIS_PGI_2"/>
</dbReference>
<dbReference type="NCBIfam" id="NF010696">
    <property type="entry name" value="PRK14096.1"/>
    <property type="match status" value="1"/>
</dbReference>
<dbReference type="PANTHER" id="PTHR11469">
    <property type="entry name" value="GLUCOSE-6-PHOSPHATE ISOMERASE"/>
    <property type="match status" value="1"/>
</dbReference>
<dbReference type="PANTHER" id="PTHR11469:SF1">
    <property type="entry name" value="GLUCOSE-6-PHOSPHATE ISOMERASE"/>
    <property type="match status" value="1"/>
</dbReference>
<dbReference type="Pfam" id="PF00342">
    <property type="entry name" value="PGI"/>
    <property type="match status" value="2"/>
</dbReference>
<dbReference type="PRINTS" id="PR00662">
    <property type="entry name" value="G6PISOMERASE"/>
</dbReference>
<dbReference type="SUPFAM" id="SSF53697">
    <property type="entry name" value="SIS domain"/>
    <property type="match status" value="1"/>
</dbReference>
<dbReference type="PROSITE" id="PS00174">
    <property type="entry name" value="P_GLUCOSE_ISOMERASE_2"/>
    <property type="match status" value="1"/>
</dbReference>
<dbReference type="PROSITE" id="PS51463">
    <property type="entry name" value="P_GLUCOSE_ISOMERASE_3"/>
    <property type="match status" value="1"/>
</dbReference>
<sequence length="528" mass="57819">MDAKALWQRYQEWLYFHEGLGLYLDVSRMRFDDAFVKSLLPKFDKAFADMAELEKGAIANPDENRMVGHYWLRNPDLAPTPEIAQEIVQTLEQIEAFAEKIQTGAIHPPKANRFTDIISIGIGGSALGPQFVAEALAPEFPPLKIHFIDNTDPAGIDRILTHLRNHLASTLVLVISKSGGTPEPRNGMIEVKKAYAGQNLDFAQYAVAITSTGSNLDKVAQSEGWLATFPMYDWVGGRTSEMSSVGLVPAALQGIDVRAMLEGAKEMDDATRVPEVKNNPAALLALSWYYSGNGKGEKDMVVLPYKDSLLLFSRYLQQLVMESLGKEKDLDGNTVYQGIAVYGNKGSTDQHAYVQQLREGVPNFFATLIEVLEDRHGASPEIDPGVTSGDYLSGFLLGTRQALYENQRDSITVTIPQVNARTVGALVALYERTVGLYASLVNINAYHQPGVEAGKKAAAVILDLQTKVVGLLQKEKTALSLEQIAEKIGAADQVEAIYKILRHLQANQRGVVFQGNLGQPSSLKISLS</sequence>
<comment type="function">
    <text evidence="1">Catalyzes the reversible isomerization of glucose-6-phosphate to fructose-6-phosphate.</text>
</comment>
<comment type="catalytic activity">
    <reaction evidence="1">
        <text>alpha-D-glucose 6-phosphate = beta-D-fructose 6-phosphate</text>
        <dbReference type="Rhea" id="RHEA:11816"/>
        <dbReference type="ChEBI" id="CHEBI:57634"/>
        <dbReference type="ChEBI" id="CHEBI:58225"/>
        <dbReference type="EC" id="5.3.1.9"/>
    </reaction>
</comment>
<comment type="pathway">
    <text evidence="1">Carbohydrate biosynthesis; gluconeogenesis.</text>
</comment>
<comment type="pathway">
    <text evidence="1">Carbohydrate degradation; glycolysis; D-glyceraldehyde 3-phosphate and glycerone phosphate from D-glucose: step 2/4.</text>
</comment>
<comment type="subcellular location">
    <subcellularLocation>
        <location evidence="1">Cytoplasm</location>
    </subcellularLocation>
</comment>
<comment type="similarity">
    <text evidence="1">Belongs to the GPI family.</text>
</comment>
<keyword id="KW-0963">Cytoplasm</keyword>
<keyword id="KW-0312">Gluconeogenesis</keyword>
<keyword id="KW-0324">Glycolysis</keyword>
<keyword id="KW-0413">Isomerase</keyword>
<keyword id="KW-1185">Reference proteome</keyword>
<gene>
    <name evidence="1" type="primary">pgi</name>
    <name type="ordered locus">alr1050</name>
</gene>
<protein>
    <recommendedName>
        <fullName evidence="1">Glucose-6-phosphate isomerase</fullName>
        <shortName evidence="1">GPI</shortName>
        <ecNumber evidence="1">5.3.1.9</ecNumber>
    </recommendedName>
    <alternativeName>
        <fullName evidence="1">Phosphoglucose isomerase</fullName>
        <shortName evidence="1">PGI</shortName>
    </alternativeName>
    <alternativeName>
        <fullName evidence="1">Phosphohexose isomerase</fullName>
        <shortName evidence="1">PHI</shortName>
    </alternativeName>
</protein>